<accession>P62046</accession>
<accession>E9QLJ4</accession>
<keyword id="KW-0963">Cytoplasm</keyword>
<keyword id="KW-0433">Leucine-rich repeat</keyword>
<keyword id="KW-0597">Phosphoprotein</keyword>
<keyword id="KW-1185">Reference proteome</keyword>
<keyword id="KW-0677">Repeat</keyword>
<feature type="chain" id="PRO_0000084479" description="Leucine-rich repeat and calponin homology domain-containing protein 1">
    <location>
        <begin position="1"/>
        <end position="709"/>
    </location>
</feature>
<feature type="repeat" description="LRR 1">
    <location>
        <begin position="60"/>
        <end position="83"/>
    </location>
</feature>
<feature type="repeat" description="LRR 2">
    <location>
        <begin position="86"/>
        <end position="108"/>
    </location>
</feature>
<feature type="repeat" description="LRR 3">
    <location>
        <begin position="109"/>
        <end position="131"/>
    </location>
</feature>
<feature type="repeat" description="LRR 4">
    <location>
        <begin position="132"/>
        <end position="155"/>
    </location>
</feature>
<feature type="repeat" description="LRR 5">
    <location>
        <begin position="157"/>
        <end position="176"/>
    </location>
</feature>
<feature type="repeat" description="LRR 6">
    <location>
        <begin position="177"/>
        <end position="199"/>
    </location>
</feature>
<feature type="repeat" description="LRR 7">
    <location>
        <begin position="200"/>
        <end position="223"/>
    </location>
</feature>
<feature type="repeat" description="LRR 8">
    <location>
        <begin position="225"/>
        <end position="244"/>
    </location>
</feature>
<feature type="repeat" description="LRR 9">
    <location>
        <begin position="245"/>
        <end position="268"/>
    </location>
</feature>
<feature type="domain" description="Calponin-homology (CH)" evidence="2">
    <location>
        <begin position="589"/>
        <end position="702"/>
    </location>
</feature>
<feature type="region of interest" description="Disordered" evidence="3">
    <location>
        <begin position="24"/>
        <end position="49"/>
    </location>
</feature>
<feature type="region of interest" description="Disordered" evidence="3">
    <location>
        <begin position="301"/>
        <end position="390"/>
    </location>
</feature>
<feature type="region of interest" description="Disordered" evidence="3">
    <location>
        <begin position="504"/>
        <end position="526"/>
    </location>
</feature>
<feature type="compositionally biased region" description="Basic residues" evidence="3">
    <location>
        <begin position="24"/>
        <end position="37"/>
    </location>
</feature>
<feature type="compositionally biased region" description="Basic and acidic residues" evidence="3">
    <location>
        <begin position="301"/>
        <end position="312"/>
    </location>
</feature>
<feature type="compositionally biased region" description="Basic and acidic residues" evidence="3">
    <location>
        <begin position="381"/>
        <end position="390"/>
    </location>
</feature>
<feature type="modified residue" description="Phosphoserine" evidence="7">
    <location>
        <position position="395"/>
    </location>
</feature>
<feature type="modified residue" description="Phosphoserine" evidence="7">
    <location>
        <position position="518"/>
    </location>
</feature>
<feature type="modified residue" description="Phosphoserine" evidence="7">
    <location>
        <position position="522"/>
    </location>
</feature>
<feature type="modified residue" description="Phosphothreonine" evidence="6 7">
    <location>
        <position position="581"/>
    </location>
</feature>
<feature type="sequence conflict" description="In Ref. 1; BAC98074." evidence="5" ref="1">
    <original>T</original>
    <variation>A</variation>
    <location>
        <position position="362"/>
    </location>
</feature>
<feature type="sequence conflict" description="In Ref. 1; BAC98074." evidence="5" ref="1">
    <original>I</original>
    <variation>V</variation>
    <location>
        <position position="372"/>
    </location>
</feature>
<evidence type="ECO:0000250" key="1">
    <source>
        <dbReference type="UniProtKB" id="Q9Y2L9"/>
    </source>
</evidence>
<evidence type="ECO:0000255" key="2">
    <source>
        <dbReference type="PROSITE-ProRule" id="PRU00044"/>
    </source>
</evidence>
<evidence type="ECO:0000256" key="3">
    <source>
        <dbReference type="SAM" id="MobiDB-lite"/>
    </source>
</evidence>
<evidence type="ECO:0000269" key="4">
    <source>
    </source>
</evidence>
<evidence type="ECO:0000305" key="5"/>
<evidence type="ECO:0007744" key="6">
    <source>
    </source>
</evidence>
<evidence type="ECO:0007744" key="7">
    <source>
    </source>
</evidence>
<reference key="1">
    <citation type="journal article" date="2003" name="DNA Res.">
        <title>Prediction of the coding sequences of mouse homologues of KIAA gene: III. The complete nucleotide sequences of 500 mouse KIAA-homologous cDNAs identified by screening of terminal sequences of cDNA clones randomly sampled from size-fractionated libraries.</title>
        <authorList>
            <person name="Okazaki N."/>
            <person name="Kikuno R."/>
            <person name="Ohara R."/>
            <person name="Inamoto S."/>
            <person name="Koseki H."/>
            <person name="Hiraoka S."/>
            <person name="Saga Y."/>
            <person name="Nagase T."/>
            <person name="Ohara O."/>
            <person name="Koga H."/>
        </authorList>
    </citation>
    <scope>NUCLEOTIDE SEQUENCE [LARGE SCALE MRNA]</scope>
    <source>
        <tissue>Embryonic tail</tissue>
    </source>
</reference>
<reference key="2">
    <citation type="journal article" date="2009" name="PLoS Biol.">
        <title>Lineage-specific biology revealed by a finished genome assembly of the mouse.</title>
        <authorList>
            <person name="Church D.M."/>
            <person name="Goodstadt L."/>
            <person name="Hillier L.W."/>
            <person name="Zody M.C."/>
            <person name="Goldstein S."/>
            <person name="She X."/>
            <person name="Bult C.J."/>
            <person name="Agarwala R."/>
            <person name="Cherry J.L."/>
            <person name="DiCuccio M."/>
            <person name="Hlavina W."/>
            <person name="Kapustin Y."/>
            <person name="Meric P."/>
            <person name="Maglott D."/>
            <person name="Birtle Z."/>
            <person name="Marques A.C."/>
            <person name="Graves T."/>
            <person name="Zhou S."/>
            <person name="Teague B."/>
            <person name="Potamousis K."/>
            <person name="Churas C."/>
            <person name="Place M."/>
            <person name="Herschleb J."/>
            <person name="Runnheim R."/>
            <person name="Forrest D."/>
            <person name="Amos-Landgraf J."/>
            <person name="Schwartz D.C."/>
            <person name="Cheng Z."/>
            <person name="Lindblad-Toh K."/>
            <person name="Eichler E.E."/>
            <person name="Ponting C.P."/>
        </authorList>
    </citation>
    <scope>NUCLEOTIDE SEQUENCE [LARGE SCALE GENOMIC DNA]</scope>
    <source>
        <strain>C57BL/6J</strain>
    </source>
</reference>
<reference key="3">
    <citation type="journal article" date="2009" name="Immunity">
        <title>The phagosomal proteome in interferon-gamma-activated macrophages.</title>
        <authorList>
            <person name="Trost M."/>
            <person name="English L."/>
            <person name="Lemieux S."/>
            <person name="Courcelles M."/>
            <person name="Desjardins M."/>
            <person name="Thibault P."/>
        </authorList>
    </citation>
    <scope>PHOSPHORYLATION [LARGE SCALE ANALYSIS] AT THR-581</scope>
    <scope>IDENTIFICATION BY MASS SPECTROMETRY [LARGE SCALE ANALYSIS]</scope>
</reference>
<reference key="4">
    <citation type="journal article" date="2010" name="Cell">
        <title>A tissue-specific atlas of mouse protein phosphorylation and expression.</title>
        <authorList>
            <person name="Huttlin E.L."/>
            <person name="Jedrychowski M.P."/>
            <person name="Elias J.E."/>
            <person name="Goswami T."/>
            <person name="Rad R."/>
            <person name="Beausoleil S.A."/>
            <person name="Villen J."/>
            <person name="Haas W."/>
            <person name="Sowa M.E."/>
            <person name="Gygi S.P."/>
        </authorList>
    </citation>
    <scope>PHOSPHORYLATION [LARGE SCALE ANALYSIS] AT SER-395; SER-518; SER-522 AND THR-581</scope>
    <scope>IDENTIFICATION BY MASS SPECTROMETRY [LARGE SCALE ANALYSIS]</scope>
    <source>
        <tissue>Kidney</tissue>
        <tissue>Lung</tissue>
        <tissue>Spleen</tissue>
    </source>
</reference>
<reference key="5">
    <citation type="journal article" date="2017" name="J. Exp. Med.">
        <title>LRCH1 interferes with DOCK8-Cdc42-induced T cell migration and ameliorates experimental autoimmune encephalomyelitis.</title>
        <authorList>
            <person name="Xu X."/>
            <person name="Han L."/>
            <person name="Zhao G."/>
            <person name="Xue S."/>
            <person name="Gao Y."/>
            <person name="Xiao J."/>
            <person name="Zhang S."/>
            <person name="Chen P."/>
            <person name="Wu Z.Y."/>
            <person name="Ding J."/>
            <person name="Hu R."/>
            <person name="Wei B."/>
            <person name="Wang H."/>
        </authorList>
    </citation>
    <scope>FUNCTION</scope>
    <scope>INTERACTION WITH DOCK8</scope>
    <scope>DISRUPTION PHENOTYPE</scope>
</reference>
<gene>
    <name type="primary">Lrch1</name>
    <name type="synonym">Chdc1</name>
    <name type="synonym">Kiaa1016</name>
</gene>
<protein>
    <recommendedName>
        <fullName>Leucine-rich repeat and calponin homology domain-containing protein 1</fullName>
    </recommendedName>
    <alternativeName>
        <fullName>Calponin homology domain-containing protein 1</fullName>
    </alternativeName>
</protein>
<dbReference type="EMBL" id="AK129264">
    <property type="protein sequence ID" value="BAC98074.1"/>
    <property type="status" value="ALT_INIT"/>
    <property type="molecule type" value="mRNA"/>
</dbReference>
<dbReference type="EMBL" id="AC135083">
    <property type="status" value="NOT_ANNOTATED_CDS"/>
    <property type="molecule type" value="Genomic_DNA"/>
</dbReference>
<dbReference type="EMBL" id="AC154621">
    <property type="status" value="NOT_ANNOTATED_CDS"/>
    <property type="molecule type" value="Genomic_DNA"/>
</dbReference>
<dbReference type="CCDS" id="CCDS36976.1"/>
<dbReference type="RefSeq" id="NP_001028611.2">
    <property type="nucleotide sequence ID" value="NM_001033439.3"/>
</dbReference>
<dbReference type="SMR" id="P62046"/>
<dbReference type="BioGRID" id="237704">
    <property type="interactions" value="5"/>
</dbReference>
<dbReference type="FunCoup" id="P62046">
    <property type="interactions" value="2019"/>
</dbReference>
<dbReference type="STRING" id="10090.ENSMUSP00000086363"/>
<dbReference type="GlyGen" id="P62046">
    <property type="glycosylation" value="1 site"/>
</dbReference>
<dbReference type="iPTMnet" id="P62046"/>
<dbReference type="PhosphoSitePlus" id="P62046"/>
<dbReference type="jPOST" id="P62046"/>
<dbReference type="PaxDb" id="10090-ENSMUSP00000086363"/>
<dbReference type="PeptideAtlas" id="P62046"/>
<dbReference type="ProteomicsDB" id="290164"/>
<dbReference type="Pumba" id="P62046"/>
<dbReference type="Antibodypedia" id="9206">
    <property type="antibodies" value="141 antibodies from 21 providers"/>
</dbReference>
<dbReference type="Ensembl" id="ENSMUST00000088970.7">
    <property type="protein sequence ID" value="ENSMUSP00000086363.6"/>
    <property type="gene ID" value="ENSMUSG00000068015.9"/>
</dbReference>
<dbReference type="GeneID" id="380916"/>
<dbReference type="KEGG" id="mmu:380916"/>
<dbReference type="UCSC" id="uc007uqf.1">
    <property type="organism name" value="mouse"/>
</dbReference>
<dbReference type="AGR" id="MGI:2443390"/>
<dbReference type="CTD" id="23143"/>
<dbReference type="MGI" id="MGI:2443390">
    <property type="gene designation" value="Lrch1"/>
</dbReference>
<dbReference type="VEuPathDB" id="HostDB:ENSMUSG00000068015"/>
<dbReference type="eggNOG" id="KOG0532">
    <property type="taxonomic scope" value="Eukaryota"/>
</dbReference>
<dbReference type="eggNOG" id="KOG0619">
    <property type="taxonomic scope" value="Eukaryota"/>
</dbReference>
<dbReference type="GeneTree" id="ENSGT00940000159528"/>
<dbReference type="HOGENOM" id="CLU_008231_2_0_1"/>
<dbReference type="InParanoid" id="P62046"/>
<dbReference type="OMA" id="KEDVCHR"/>
<dbReference type="OrthoDB" id="6149831at2759"/>
<dbReference type="PhylomeDB" id="P62046"/>
<dbReference type="TreeFam" id="TF318428"/>
<dbReference type="BioGRID-ORCS" id="380916">
    <property type="hits" value="1 hit in 77 CRISPR screens"/>
</dbReference>
<dbReference type="ChiTaRS" id="Lrch1">
    <property type="organism name" value="mouse"/>
</dbReference>
<dbReference type="PRO" id="PR:P62046"/>
<dbReference type="Proteomes" id="UP000000589">
    <property type="component" value="Chromosome 14"/>
</dbReference>
<dbReference type="RNAct" id="P62046">
    <property type="molecule type" value="protein"/>
</dbReference>
<dbReference type="Bgee" id="ENSMUSG00000068015">
    <property type="expression patterns" value="Expressed in utricle of membranous labyrinth and 216 other cell types or tissues"/>
</dbReference>
<dbReference type="ExpressionAtlas" id="P62046">
    <property type="expression patterns" value="baseline and differential"/>
</dbReference>
<dbReference type="GO" id="GO:0005737">
    <property type="term" value="C:cytoplasm"/>
    <property type="evidence" value="ECO:0007669"/>
    <property type="project" value="UniProtKB-SubCell"/>
</dbReference>
<dbReference type="GO" id="GO:1990869">
    <property type="term" value="P:cellular response to chemokine"/>
    <property type="evidence" value="ECO:0000315"/>
    <property type="project" value="UniProtKB"/>
</dbReference>
<dbReference type="GO" id="GO:0034260">
    <property type="term" value="P:negative regulation of GTPase activity"/>
    <property type="evidence" value="ECO:0000314"/>
    <property type="project" value="UniProtKB"/>
</dbReference>
<dbReference type="GO" id="GO:2000405">
    <property type="term" value="P:negative regulation of T cell migration"/>
    <property type="evidence" value="ECO:0000315"/>
    <property type="project" value="UniProtKB"/>
</dbReference>
<dbReference type="CDD" id="cd21271">
    <property type="entry name" value="CH_LRCH2"/>
    <property type="match status" value="1"/>
</dbReference>
<dbReference type="FunFam" id="1.10.418.10:FF:000021">
    <property type="entry name" value="Leucine-rich repeat and calponin homology domain-containing protein 1 isoform 3"/>
    <property type="match status" value="1"/>
</dbReference>
<dbReference type="FunFam" id="3.80.10.10:FF:000007">
    <property type="entry name" value="Leucine-rich repeat and calponin homology domain-containing protein 1 isoform 3"/>
    <property type="match status" value="1"/>
</dbReference>
<dbReference type="Gene3D" id="1.10.418.10">
    <property type="entry name" value="Calponin-like domain"/>
    <property type="match status" value="1"/>
</dbReference>
<dbReference type="Gene3D" id="3.80.10.10">
    <property type="entry name" value="Ribonuclease Inhibitor"/>
    <property type="match status" value="1"/>
</dbReference>
<dbReference type="InterPro" id="IPR001715">
    <property type="entry name" value="CH_dom"/>
</dbReference>
<dbReference type="InterPro" id="IPR036872">
    <property type="entry name" value="CH_dom_sf"/>
</dbReference>
<dbReference type="InterPro" id="IPR001611">
    <property type="entry name" value="Leu-rich_rpt"/>
</dbReference>
<dbReference type="InterPro" id="IPR003591">
    <property type="entry name" value="Leu-rich_rpt_typical-subtyp"/>
</dbReference>
<dbReference type="InterPro" id="IPR032675">
    <property type="entry name" value="LRR_dom_sf"/>
</dbReference>
<dbReference type="InterPro" id="IPR050216">
    <property type="entry name" value="LRR_domain-containing"/>
</dbReference>
<dbReference type="PANTHER" id="PTHR48051">
    <property type="match status" value="1"/>
</dbReference>
<dbReference type="PANTHER" id="PTHR48051:SF38">
    <property type="entry name" value="LEUCINE RICH REPEATS AND CALPONIN HOMOLOGY DOMAIN CONTAINING 1"/>
    <property type="match status" value="1"/>
</dbReference>
<dbReference type="Pfam" id="PF00307">
    <property type="entry name" value="CH"/>
    <property type="match status" value="1"/>
</dbReference>
<dbReference type="Pfam" id="PF13855">
    <property type="entry name" value="LRR_8"/>
    <property type="match status" value="2"/>
</dbReference>
<dbReference type="SMART" id="SM00033">
    <property type="entry name" value="CH"/>
    <property type="match status" value="1"/>
</dbReference>
<dbReference type="SMART" id="SM00364">
    <property type="entry name" value="LRR_BAC"/>
    <property type="match status" value="4"/>
</dbReference>
<dbReference type="SMART" id="SM00369">
    <property type="entry name" value="LRR_TYP"/>
    <property type="match status" value="5"/>
</dbReference>
<dbReference type="SUPFAM" id="SSF47576">
    <property type="entry name" value="Calponin-homology domain, CH-domain"/>
    <property type="match status" value="1"/>
</dbReference>
<dbReference type="SUPFAM" id="SSF52058">
    <property type="entry name" value="L domain-like"/>
    <property type="match status" value="1"/>
</dbReference>
<dbReference type="PROSITE" id="PS50021">
    <property type="entry name" value="CH"/>
    <property type="match status" value="1"/>
</dbReference>
<dbReference type="PROSITE" id="PS51450">
    <property type="entry name" value="LRR"/>
    <property type="match status" value="6"/>
</dbReference>
<name>LRCH1_MOUSE</name>
<proteinExistence type="evidence at protein level"/>
<comment type="function">
    <text evidence="4">Acts as a negative regulator of GTPase CDC42 by sequestering CDC42-guanine exchange factor DOCK8. Probably by preventing CDC42 activation, negatively regulates CD4(+) T-cell migration in response to chemokine stimulation.</text>
</comment>
<comment type="subunit">
    <text evidence="4">Interacts (via LRR repeats) with unphosphorylated DOCK8 (via DHR-2 domain); the interaction prevents the association between DOCK8 and CDC42.</text>
</comment>
<comment type="subcellular location">
    <subcellularLocation>
        <location evidence="1">Cytoplasm</location>
    </subcellularLocation>
</comment>
<comment type="disruption phenotype">
    <text evidence="4">No visible phenotype. Mice are viable, fertile and have normal CD4(+) T-cell populations in lymph nodes and spleen. In an experimental autoimmune encephalomyelitis (EAE) disease model, the symptoms, such as paralysis, are more severe.</text>
</comment>
<comment type="sequence caution" evidence="5">
    <conflict type="erroneous initiation">
        <sequence resource="EMBL-CDS" id="BAC98074"/>
    </conflict>
    <text>Extended N-terminus.</text>
</comment>
<sequence>MATPGSEPQAFAPALSVTALHPHLHQHHQHHQHHQHHGGTGGTGFNLPLNRGLERALEEAANSGGLNLSARKLKEFPRTTAPGHDLSDTVRADLSKNRLVEVPMELCQFVSLEILNLYHNCIRVIPEAIVNLQMLTHLNLSRNQLSALPACLCGLPLKVLIASNNKLGSLPEEIGQLKQLMELDVSCNEITALPQQIGQLKSLRELNVRRNYLKVLPPELVDLPLVKFDFSCNKVLVIPVCFREMKQLQVLLLENNPLQSPPAQICTKGKVHIFKYLSIQACQIKTSDSLYLPTIERPHLHQHVEDSKKDSDSGVGSDNGDKRLSATEPSDEDTVSLNAPMSNIVEEDQTIKEDACHRLTPTKGEFQPKPSILGDSGISGQEREQLAGRADARHSGLMNYIKDQAEDCEELLRIEEDAHWHMEELLNSSKDRELDIAMIEQLREAELLQDPNGLSADIIERSILNLFPMDSGEASEFPDPSLNGQLQLETSPDREVQNDLMLQSNGSQYSPNEIRENSPSVSPTANITAPFGLKPRSGSWCPEEVQGSLQAESSPRRPQLLSRHVFLRPQRNLESIDPQFTIRRKMEQMREEKELVEQLRESIEMRLKVTLHEDLGAALMDGVVLCHLANHVRPRSVASIHVPSPAVPKLSMAKCRRNVENFLEACRKLGVPEEKLCLPHHILEEKGLVKVGTTVQALLDVTVTKALFT</sequence>
<organism>
    <name type="scientific">Mus musculus</name>
    <name type="common">Mouse</name>
    <dbReference type="NCBI Taxonomy" id="10090"/>
    <lineage>
        <taxon>Eukaryota</taxon>
        <taxon>Metazoa</taxon>
        <taxon>Chordata</taxon>
        <taxon>Craniata</taxon>
        <taxon>Vertebrata</taxon>
        <taxon>Euteleostomi</taxon>
        <taxon>Mammalia</taxon>
        <taxon>Eutheria</taxon>
        <taxon>Euarchontoglires</taxon>
        <taxon>Glires</taxon>
        <taxon>Rodentia</taxon>
        <taxon>Myomorpha</taxon>
        <taxon>Muroidea</taxon>
        <taxon>Muridae</taxon>
        <taxon>Murinae</taxon>
        <taxon>Mus</taxon>
        <taxon>Mus</taxon>
    </lineage>
</organism>